<proteinExistence type="evidence at protein level"/>
<feature type="chain" id="PRO_1000118659" description="Diaminopimelate epimerase">
    <location>
        <begin position="1"/>
        <end position="281"/>
    </location>
</feature>
<feature type="active site" description="Proton donor" evidence="1">
    <location>
        <position position="75"/>
    </location>
</feature>
<feature type="active site" description="Proton acceptor" evidence="1">
    <location>
        <position position="220"/>
    </location>
</feature>
<feature type="binding site" evidence="1">
    <location>
        <position position="13"/>
    </location>
    <ligand>
        <name>substrate</name>
    </ligand>
</feature>
<feature type="binding site" evidence="1">
    <location>
        <position position="46"/>
    </location>
    <ligand>
        <name>substrate</name>
    </ligand>
</feature>
<feature type="binding site" evidence="1">
    <location>
        <position position="66"/>
    </location>
    <ligand>
        <name>substrate</name>
    </ligand>
</feature>
<feature type="binding site" evidence="1">
    <location>
        <begin position="76"/>
        <end position="77"/>
    </location>
    <ligand>
        <name>substrate</name>
    </ligand>
</feature>
<feature type="binding site" evidence="1">
    <location>
        <position position="160"/>
    </location>
    <ligand>
        <name>substrate</name>
    </ligand>
</feature>
<feature type="binding site" evidence="1">
    <location>
        <position position="193"/>
    </location>
    <ligand>
        <name>substrate</name>
    </ligand>
</feature>
<feature type="binding site" evidence="1">
    <location>
        <begin position="211"/>
        <end position="212"/>
    </location>
    <ligand>
        <name>substrate</name>
    </ligand>
</feature>
<feature type="binding site" evidence="1">
    <location>
        <begin position="221"/>
        <end position="222"/>
    </location>
    <ligand>
        <name>substrate</name>
    </ligand>
</feature>
<feature type="site" description="Could be important to modulate the pK values of the two catalytic cysteine residues" evidence="1">
    <location>
        <position position="162"/>
    </location>
</feature>
<feature type="site" description="Could be important to modulate the pK values of the two catalytic cysteine residues" evidence="1">
    <location>
        <position position="211"/>
    </location>
</feature>
<feature type="site" description="Important for dimerization" evidence="1">
    <location>
        <position position="270"/>
    </location>
</feature>
<feature type="strand" evidence="3">
    <location>
        <begin position="3"/>
        <end position="10"/>
    </location>
</feature>
<feature type="strand" evidence="3">
    <location>
        <begin position="13"/>
        <end position="19"/>
    </location>
</feature>
<feature type="helix" evidence="3">
    <location>
        <begin position="29"/>
        <end position="36"/>
    </location>
</feature>
<feature type="turn" evidence="3">
    <location>
        <begin position="38"/>
        <end position="40"/>
    </location>
</feature>
<feature type="strand" evidence="3">
    <location>
        <begin position="45"/>
        <end position="51"/>
    </location>
</feature>
<feature type="strand" evidence="3">
    <location>
        <begin position="59"/>
        <end position="66"/>
    </location>
</feature>
<feature type="helix" evidence="3">
    <location>
        <begin position="78"/>
        <end position="88"/>
    </location>
</feature>
<feature type="strand" evidence="3">
    <location>
        <begin position="99"/>
        <end position="101"/>
    </location>
</feature>
<feature type="strand" evidence="3">
    <location>
        <begin position="104"/>
        <end position="106"/>
    </location>
</feature>
<feature type="helix" evidence="3">
    <location>
        <begin position="112"/>
        <end position="114"/>
    </location>
</feature>
<feature type="strand" evidence="3">
    <location>
        <begin position="116"/>
        <end position="119"/>
    </location>
</feature>
<feature type="helix" evidence="3">
    <location>
        <begin position="127"/>
        <end position="129"/>
    </location>
</feature>
<feature type="strand" evidence="3">
    <location>
        <begin position="141"/>
        <end position="144"/>
    </location>
</feature>
<feature type="helix" evidence="3">
    <location>
        <begin position="146"/>
        <end position="148"/>
    </location>
</feature>
<feature type="strand" evidence="3">
    <location>
        <begin position="150"/>
        <end position="166"/>
    </location>
</feature>
<feature type="turn" evidence="3">
    <location>
        <begin position="170"/>
        <end position="172"/>
    </location>
</feature>
<feature type="helix" evidence="3">
    <location>
        <begin position="175"/>
        <end position="183"/>
    </location>
</feature>
<feature type="strand" evidence="3">
    <location>
        <begin position="193"/>
        <end position="201"/>
    </location>
</feature>
<feature type="strand" evidence="3">
    <location>
        <begin position="204"/>
        <end position="211"/>
    </location>
</feature>
<feature type="turn" evidence="3">
    <location>
        <begin position="212"/>
        <end position="214"/>
    </location>
</feature>
<feature type="strand" evidence="3">
    <location>
        <begin position="215"/>
        <end position="218"/>
    </location>
</feature>
<feature type="helix" evidence="3">
    <location>
        <begin position="221"/>
        <end position="233"/>
    </location>
</feature>
<feature type="strand" evidence="3">
    <location>
        <begin position="239"/>
        <end position="245"/>
    </location>
</feature>
<feature type="strand" evidence="3">
    <location>
        <begin position="248"/>
        <end position="253"/>
    </location>
</feature>
<feature type="strand" evidence="3">
    <location>
        <begin position="261"/>
        <end position="264"/>
    </location>
</feature>
<feature type="strand" evidence="3">
    <location>
        <begin position="267"/>
        <end position="274"/>
    </location>
</feature>
<feature type="helix" evidence="3">
    <location>
        <begin position="276"/>
        <end position="279"/>
    </location>
</feature>
<reference key="1">
    <citation type="journal article" date="2008" name="J. Bacteriol.">
        <title>Comparative genome sequence analysis of multidrug-resistant Acinetobacter baumannii.</title>
        <authorList>
            <person name="Adams M.D."/>
            <person name="Goglin K."/>
            <person name="Molyneaux N."/>
            <person name="Hujer K.M."/>
            <person name="Lavender H."/>
            <person name="Jamison J.J."/>
            <person name="MacDonald I.J."/>
            <person name="Martin K.M."/>
            <person name="Russo T."/>
            <person name="Campagnari A.A."/>
            <person name="Hujer A.M."/>
            <person name="Bonomo R.A."/>
            <person name="Gill S.R."/>
        </authorList>
    </citation>
    <scope>NUCLEOTIDE SEQUENCE [LARGE SCALE GENOMIC DNA]</scope>
    <source>
        <strain>AB307-0294</strain>
    </source>
</reference>
<reference key="2">
    <citation type="submission" date="2015-12" db="PDB data bank">
        <title>Structure of a diaminopimelate epimerase from Acinetobacter baumannii.</title>
        <authorList>
            <person name="Mayclin S.J."/>
            <person name="Lorimer D.D."/>
            <person name="Edwards T.E."/>
        </authorList>
    </citation>
    <scope>X-RAY CRYSTALLOGRAPHY (1.85 ANGSTROMS) OF 1-280</scope>
    <scope>SUBUNIT</scope>
</reference>
<evidence type="ECO:0000255" key="1">
    <source>
        <dbReference type="HAMAP-Rule" id="MF_00197"/>
    </source>
</evidence>
<evidence type="ECO:0000305" key="2">
    <source ref="2"/>
</evidence>
<evidence type="ECO:0007829" key="3">
    <source>
        <dbReference type="PDB" id="5HA4"/>
    </source>
</evidence>
<comment type="function">
    <text evidence="1">Catalyzes the stereoinversion of LL-2,6-diaminopimelate (L,L-DAP) to meso-diaminopimelate (meso-DAP), a precursor of L-lysine and an essential component of the bacterial peptidoglycan.</text>
</comment>
<comment type="catalytic activity">
    <reaction evidence="1">
        <text>(2S,6S)-2,6-diaminopimelate = meso-2,6-diaminopimelate</text>
        <dbReference type="Rhea" id="RHEA:15393"/>
        <dbReference type="ChEBI" id="CHEBI:57609"/>
        <dbReference type="ChEBI" id="CHEBI:57791"/>
        <dbReference type="EC" id="5.1.1.7"/>
    </reaction>
</comment>
<comment type="pathway">
    <text evidence="1">Amino-acid biosynthesis; L-lysine biosynthesis via DAP pathway; DL-2,6-diaminopimelate from LL-2,6-diaminopimelate: step 1/1.</text>
</comment>
<comment type="subunit">
    <text evidence="2">Homodimer.</text>
</comment>
<comment type="subcellular location">
    <subcellularLocation>
        <location evidence="1">Cytoplasm</location>
    </subcellularLocation>
</comment>
<comment type="similarity">
    <text evidence="1">Belongs to the diaminopimelate epimerase family.</text>
</comment>
<organism>
    <name type="scientific">Acinetobacter baumannii (strain AB307-0294)</name>
    <dbReference type="NCBI Taxonomy" id="557600"/>
    <lineage>
        <taxon>Bacteria</taxon>
        <taxon>Pseudomonadati</taxon>
        <taxon>Pseudomonadota</taxon>
        <taxon>Gammaproteobacteria</taxon>
        <taxon>Moraxellales</taxon>
        <taxon>Moraxellaceae</taxon>
        <taxon>Acinetobacter</taxon>
        <taxon>Acinetobacter calcoaceticus/baumannii complex</taxon>
    </lineage>
</organism>
<sequence length="281" mass="31139">MLLEFTKMHGLGNDFMVVDLISQRAYLDTATIQRLADRHFGVGFDQLLIVEPPDVPEADFKYRIFNADGSEVEQCGNGVRCFARFVHERHLTNKTNITVQTKAGIVKPELGQNGWVRVNMGYPKFLPNEIPFVAEEPEALYTLELANDQNISIDVVNMGNPHAVTIVPDVLTADVAGIGPQVESHKRFPERVNAGFMQVIDDKHVRLRVFERGVGETLACGTGACAAAVSGMRRGLLANSVEVELAGGKLQIEWQEGDVVWMTGPTTHVYDGRLDLRYFQG</sequence>
<name>DAPF_ACIB3</name>
<protein>
    <recommendedName>
        <fullName evidence="1">Diaminopimelate epimerase</fullName>
        <shortName evidence="1">DAP epimerase</shortName>
        <ecNumber evidence="1">5.1.1.7</ecNumber>
    </recommendedName>
    <alternativeName>
        <fullName evidence="1">PLP-independent amino acid racemase</fullName>
    </alternativeName>
</protein>
<gene>
    <name evidence="1" type="primary">dapF</name>
    <name type="ordered locus">ABBFA_000848</name>
</gene>
<accession>B7GY71</accession>
<keyword id="KW-0002">3D-structure</keyword>
<keyword id="KW-0028">Amino-acid biosynthesis</keyword>
<keyword id="KW-0963">Cytoplasm</keyword>
<keyword id="KW-0413">Isomerase</keyword>
<keyword id="KW-0457">Lysine biosynthesis</keyword>
<dbReference type="EC" id="5.1.1.7" evidence="1"/>
<dbReference type="EMBL" id="CP001172">
    <property type="protein sequence ID" value="ACJ59349.1"/>
    <property type="molecule type" value="Genomic_DNA"/>
</dbReference>
<dbReference type="RefSeq" id="WP_000923484.1">
    <property type="nucleotide sequence ID" value="NZ_CP001172.1"/>
</dbReference>
<dbReference type="PDB" id="5HA4">
    <property type="method" value="X-ray"/>
    <property type="resolution" value="1.85 A"/>
    <property type="chains" value="A/B=1-280"/>
</dbReference>
<dbReference type="PDBsum" id="5HA4"/>
<dbReference type="SMR" id="B7GY71"/>
<dbReference type="GeneID" id="92894906"/>
<dbReference type="HOGENOM" id="CLU_053306_1_1_6"/>
<dbReference type="UniPathway" id="UPA00034">
    <property type="reaction ID" value="UER00025"/>
</dbReference>
<dbReference type="EvolutionaryTrace" id="B7GY71"/>
<dbReference type="Proteomes" id="UP000006924">
    <property type="component" value="Chromosome"/>
</dbReference>
<dbReference type="GO" id="GO:0005829">
    <property type="term" value="C:cytosol"/>
    <property type="evidence" value="ECO:0007669"/>
    <property type="project" value="TreeGrafter"/>
</dbReference>
<dbReference type="GO" id="GO:0008837">
    <property type="term" value="F:diaminopimelate epimerase activity"/>
    <property type="evidence" value="ECO:0007669"/>
    <property type="project" value="UniProtKB-UniRule"/>
</dbReference>
<dbReference type="GO" id="GO:0009089">
    <property type="term" value="P:lysine biosynthetic process via diaminopimelate"/>
    <property type="evidence" value="ECO:0007669"/>
    <property type="project" value="UniProtKB-UniRule"/>
</dbReference>
<dbReference type="FunFam" id="3.10.310.10:FF:000001">
    <property type="entry name" value="Diaminopimelate epimerase"/>
    <property type="match status" value="1"/>
</dbReference>
<dbReference type="FunFam" id="3.10.310.10:FF:000004">
    <property type="entry name" value="Diaminopimelate epimerase"/>
    <property type="match status" value="1"/>
</dbReference>
<dbReference type="Gene3D" id="3.10.310.10">
    <property type="entry name" value="Diaminopimelate Epimerase, Chain A, domain 1"/>
    <property type="match status" value="2"/>
</dbReference>
<dbReference type="HAMAP" id="MF_00197">
    <property type="entry name" value="DAP_epimerase"/>
    <property type="match status" value="1"/>
</dbReference>
<dbReference type="InterPro" id="IPR018510">
    <property type="entry name" value="DAP_epimerase_AS"/>
</dbReference>
<dbReference type="InterPro" id="IPR001653">
    <property type="entry name" value="DAP_epimerase_DapF"/>
</dbReference>
<dbReference type="NCBIfam" id="TIGR00652">
    <property type="entry name" value="DapF"/>
    <property type="match status" value="1"/>
</dbReference>
<dbReference type="PANTHER" id="PTHR31689:SF0">
    <property type="entry name" value="DIAMINOPIMELATE EPIMERASE"/>
    <property type="match status" value="1"/>
</dbReference>
<dbReference type="PANTHER" id="PTHR31689">
    <property type="entry name" value="DIAMINOPIMELATE EPIMERASE, CHLOROPLASTIC"/>
    <property type="match status" value="1"/>
</dbReference>
<dbReference type="Pfam" id="PF01678">
    <property type="entry name" value="DAP_epimerase"/>
    <property type="match status" value="2"/>
</dbReference>
<dbReference type="SUPFAM" id="SSF54506">
    <property type="entry name" value="Diaminopimelate epimerase-like"/>
    <property type="match status" value="1"/>
</dbReference>
<dbReference type="PROSITE" id="PS01326">
    <property type="entry name" value="DAP_EPIMERASE"/>
    <property type="match status" value="1"/>
</dbReference>